<reference key="1">
    <citation type="journal article" date="2005" name="Nucleic Acids Res.">
        <title>The genome sequence of Salmonella enterica serovar Choleraesuis, a highly invasive and resistant zoonotic pathogen.</title>
        <authorList>
            <person name="Chiu C.-H."/>
            <person name="Tang P."/>
            <person name="Chu C."/>
            <person name="Hu S."/>
            <person name="Bao Q."/>
            <person name="Yu J."/>
            <person name="Chou Y.-Y."/>
            <person name="Wang H.-S."/>
            <person name="Lee Y.-S."/>
        </authorList>
    </citation>
    <scope>NUCLEOTIDE SEQUENCE [LARGE SCALE GENOMIC DNA]</scope>
    <source>
        <strain>SC-B67</strain>
    </source>
</reference>
<proteinExistence type="inferred from homology"/>
<name>TATB_SALCH</name>
<accession>Q57HN4</accession>
<evidence type="ECO:0000255" key="1">
    <source>
        <dbReference type="HAMAP-Rule" id="MF_00237"/>
    </source>
</evidence>
<evidence type="ECO:0000256" key="2">
    <source>
        <dbReference type="SAM" id="MobiDB-lite"/>
    </source>
</evidence>
<protein>
    <recommendedName>
        <fullName evidence="1">Sec-independent protein translocase protein TatB</fullName>
    </recommendedName>
</protein>
<gene>
    <name evidence="1" type="primary">tatB</name>
    <name type="ordered locus">SCH_3872</name>
</gene>
<keyword id="KW-0997">Cell inner membrane</keyword>
<keyword id="KW-1003">Cell membrane</keyword>
<keyword id="KW-0472">Membrane</keyword>
<keyword id="KW-0653">Protein transport</keyword>
<keyword id="KW-0811">Translocation</keyword>
<keyword id="KW-0812">Transmembrane</keyword>
<keyword id="KW-1133">Transmembrane helix</keyword>
<keyword id="KW-0813">Transport</keyword>
<organism>
    <name type="scientific">Salmonella choleraesuis (strain SC-B67)</name>
    <dbReference type="NCBI Taxonomy" id="321314"/>
    <lineage>
        <taxon>Bacteria</taxon>
        <taxon>Pseudomonadati</taxon>
        <taxon>Pseudomonadota</taxon>
        <taxon>Gammaproteobacteria</taxon>
        <taxon>Enterobacterales</taxon>
        <taxon>Enterobacteriaceae</taxon>
        <taxon>Salmonella</taxon>
    </lineage>
</organism>
<comment type="function">
    <text evidence="1">Part of the twin-arginine translocation (Tat) system that transports large folded proteins containing a characteristic twin-arginine motif in their signal peptide across membranes. Together with TatC, TatB is part of a receptor directly interacting with Tat signal peptides. TatB may form an oligomeric binding site that transiently accommodates folded Tat precursor proteins before their translocation.</text>
</comment>
<comment type="subunit">
    <text evidence="1">The Tat system comprises two distinct complexes: a TatABC complex, containing multiple copies of TatA, TatB and TatC subunits, and a separate TatA complex, containing only TatA subunits. Substrates initially bind to the TatABC complex, which probably triggers association of the separate TatA complex to form the active translocon.</text>
</comment>
<comment type="subcellular location">
    <subcellularLocation>
        <location evidence="1">Cell inner membrane</location>
        <topology evidence="1">Single-pass membrane protein</topology>
    </subcellularLocation>
</comment>
<comment type="similarity">
    <text evidence="1">Belongs to the TatB family.</text>
</comment>
<feature type="chain" id="PRO_0000301231" description="Sec-independent protein translocase protein TatB">
    <location>
        <begin position="1"/>
        <end position="182"/>
    </location>
</feature>
<feature type="transmembrane region" description="Helical" evidence="1">
    <location>
        <begin position="1"/>
        <end position="21"/>
    </location>
</feature>
<feature type="region of interest" description="Disordered" evidence="2">
    <location>
        <begin position="87"/>
        <end position="107"/>
    </location>
</feature>
<feature type="region of interest" description="Disordered" evidence="2">
    <location>
        <begin position="121"/>
        <end position="182"/>
    </location>
</feature>
<feature type="compositionally biased region" description="Low complexity" evidence="2">
    <location>
        <begin position="168"/>
        <end position="182"/>
    </location>
</feature>
<dbReference type="EMBL" id="AE017220">
    <property type="protein sequence ID" value="AAX67778.1"/>
    <property type="molecule type" value="Genomic_DNA"/>
</dbReference>
<dbReference type="RefSeq" id="WP_000459612.1">
    <property type="nucleotide sequence ID" value="NC_006905.1"/>
</dbReference>
<dbReference type="SMR" id="Q57HN4"/>
<dbReference type="KEGG" id="sec:SCH_3872"/>
<dbReference type="HOGENOM" id="CLU_086034_1_0_6"/>
<dbReference type="Proteomes" id="UP000000538">
    <property type="component" value="Chromosome"/>
</dbReference>
<dbReference type="GO" id="GO:0033281">
    <property type="term" value="C:TAT protein transport complex"/>
    <property type="evidence" value="ECO:0007669"/>
    <property type="project" value="UniProtKB-UniRule"/>
</dbReference>
<dbReference type="GO" id="GO:0008320">
    <property type="term" value="F:protein transmembrane transporter activity"/>
    <property type="evidence" value="ECO:0007669"/>
    <property type="project" value="UniProtKB-UniRule"/>
</dbReference>
<dbReference type="GO" id="GO:0043953">
    <property type="term" value="P:protein transport by the Tat complex"/>
    <property type="evidence" value="ECO:0007669"/>
    <property type="project" value="UniProtKB-UniRule"/>
</dbReference>
<dbReference type="FunFam" id="1.20.5.3310:FF:000002">
    <property type="entry name" value="Sec-independent protein translocase protein TatB"/>
    <property type="match status" value="1"/>
</dbReference>
<dbReference type="Gene3D" id="1.20.5.3310">
    <property type="match status" value="1"/>
</dbReference>
<dbReference type="HAMAP" id="MF_00237">
    <property type="entry name" value="TatB"/>
    <property type="match status" value="1"/>
</dbReference>
<dbReference type="InterPro" id="IPR018448">
    <property type="entry name" value="TatB"/>
</dbReference>
<dbReference type="NCBIfam" id="TIGR01410">
    <property type="entry name" value="tatB"/>
    <property type="match status" value="1"/>
</dbReference>
<dbReference type="PANTHER" id="PTHR33162">
    <property type="entry name" value="SEC-INDEPENDENT PROTEIN TRANSLOCASE PROTEIN TATA, CHLOROPLASTIC"/>
    <property type="match status" value="1"/>
</dbReference>
<dbReference type="PANTHER" id="PTHR33162:SF1">
    <property type="entry name" value="SEC-INDEPENDENT PROTEIN TRANSLOCASE PROTEIN TATA, CHLOROPLASTIC"/>
    <property type="match status" value="1"/>
</dbReference>
<dbReference type="PRINTS" id="PR01506">
    <property type="entry name" value="TATBPROTEIN"/>
</dbReference>
<sequence>MFDIGFSELLLVFVIGLIVLGPQRLPVAVKTVAGWIRALRSLATTVQNELTQELKLQEFQDSLKKVEKASLENLTPELKASMDELRQAAESMKRTYSANDPEQASDEAHTIHNPVVKGNETQHEGVTPAAAETQASAPEQKPEPVKANVPESTETASVATIDAEKKSAAPVVESSPSSSDKP</sequence>